<proteinExistence type="inferred from homology"/>
<comment type="function">
    <text evidence="1">Component of the type II secretion system required for the energy-dependent secretion of extracellular factors such as proteases and toxins from the periplasm. Part of the pseudopilus tip complex that is critical for the recognition and binding of secretion substrates.</text>
</comment>
<comment type="subunit">
    <text evidence="1">Type II secretion is composed of four main components: the outer membrane complex, the inner membrane complex, the cytoplasmic secretion ATPase and the periplasm-spanning pseudopilus. Interacts with core component PulG.</text>
</comment>
<comment type="subcellular location">
    <subcellularLocation>
        <location evidence="1">Cell inner membrane</location>
        <topology evidence="2">Single-pass membrane protein</topology>
    </subcellularLocation>
</comment>
<comment type="PTM">
    <text evidence="1">Cleaved by prepilin peptidase.</text>
</comment>
<comment type="PTM">
    <text evidence="1">Methylated by prepilin peptidase at the amino group of the N-terminal phenylalanine once the leader sequence is cleaved by prepilin peptidase.</text>
</comment>
<comment type="similarity">
    <text evidence="4">Belongs to the GSP J family.</text>
</comment>
<gene>
    <name type="primary">pulJ</name>
</gene>
<evidence type="ECO:0000250" key="1">
    <source>
        <dbReference type="UniProtKB" id="Q00517"/>
    </source>
</evidence>
<evidence type="ECO:0000255" key="2"/>
<evidence type="ECO:0000255" key="3">
    <source>
        <dbReference type="PROSITE-ProRule" id="PRU01070"/>
    </source>
</evidence>
<evidence type="ECO:0000305" key="4"/>
<reference key="1">
    <citation type="journal article" date="1990" name="Mol. Gen. Genet.">
        <title>Five additional genes in the pulC-O operon of the Gram-negative bacterium Klebsiella oxytoca UNF5023 which are required for pullulanase secretion.</title>
        <authorList>
            <person name="Reyss I."/>
            <person name="Pugsley A.P."/>
        </authorList>
    </citation>
    <scope>NUCLEOTIDE SEQUENCE [GENOMIC DNA]</scope>
    <source>
        <strain>UNF 5023</strain>
    </source>
</reference>
<protein>
    <recommendedName>
        <fullName>Type II secretion system protein J</fullName>
        <shortName>T2SS protein J</shortName>
    </recommendedName>
    <alternativeName>
        <fullName>General secretion pathway protein J</fullName>
    </alternativeName>
    <alternativeName>
        <fullName>Pullulanase secretion protein PulJ</fullName>
    </alternativeName>
</protein>
<name>GSPJ_KLEPN</name>
<feature type="propeptide" id="PRO_0000024254" description="Leader sequence" evidence="3">
    <location>
        <begin position="1"/>
        <end position="7"/>
    </location>
</feature>
<feature type="chain" id="PRO_0000024255" description="Type II secretion system protein J">
    <location>
        <begin position="8"/>
        <end position="198"/>
    </location>
</feature>
<feature type="transmembrane region" description="Helical" evidence="2">
    <location>
        <begin position="8"/>
        <end position="28"/>
    </location>
</feature>
<feature type="modified residue" description="N-methylphenylalanine" evidence="3">
    <location>
        <position position="8"/>
    </location>
</feature>
<dbReference type="EMBL" id="M32613">
    <property type="protein sequence ID" value="AAA25132.1"/>
    <property type="molecule type" value="Genomic_DNA"/>
</dbReference>
<dbReference type="SMR" id="P15749"/>
<dbReference type="TCDB" id="3.A.15.1.1">
    <property type="family name" value="the outer membrane protein secreting main terminal branch (mtb) family"/>
</dbReference>
<dbReference type="GO" id="GO:0005886">
    <property type="term" value="C:plasma membrane"/>
    <property type="evidence" value="ECO:0007669"/>
    <property type="project" value="UniProtKB-SubCell"/>
</dbReference>
<dbReference type="GO" id="GO:0015627">
    <property type="term" value="C:type II protein secretion system complex"/>
    <property type="evidence" value="ECO:0007669"/>
    <property type="project" value="InterPro"/>
</dbReference>
<dbReference type="GO" id="GO:0015628">
    <property type="term" value="P:protein secretion by the type II secretion system"/>
    <property type="evidence" value="ECO:0007669"/>
    <property type="project" value="InterPro"/>
</dbReference>
<dbReference type="Gene3D" id="3.10.610.10">
    <property type="entry name" value="GSPII I/J protein-like"/>
    <property type="match status" value="1"/>
</dbReference>
<dbReference type="Gene3D" id="2.10.70.20">
    <property type="entry name" value="gspk-gspi-gspj complex like domains"/>
    <property type="match status" value="1"/>
</dbReference>
<dbReference type="InterPro" id="IPR012902">
    <property type="entry name" value="N_methyl_site"/>
</dbReference>
<dbReference type="InterPro" id="IPR045584">
    <property type="entry name" value="Pilin-like"/>
</dbReference>
<dbReference type="InterPro" id="IPR010055">
    <property type="entry name" value="T2SS_protein-GspJ"/>
</dbReference>
<dbReference type="InterPro" id="IPR051621">
    <property type="entry name" value="T2SS_protein_J"/>
</dbReference>
<dbReference type="NCBIfam" id="TIGR01711">
    <property type="entry name" value="gspJ"/>
    <property type="match status" value="1"/>
</dbReference>
<dbReference type="NCBIfam" id="TIGR02532">
    <property type="entry name" value="IV_pilin_GFxxxE"/>
    <property type="match status" value="1"/>
</dbReference>
<dbReference type="PANTHER" id="PTHR39583:SF2">
    <property type="entry name" value="TYPE II SECRETION SYSTEM PROTEIN J"/>
    <property type="match status" value="1"/>
</dbReference>
<dbReference type="PANTHER" id="PTHR39583">
    <property type="entry name" value="TYPE II SECRETION SYSTEM PROTEIN J-RELATED"/>
    <property type="match status" value="1"/>
</dbReference>
<dbReference type="Pfam" id="PF07963">
    <property type="entry name" value="N_methyl"/>
    <property type="match status" value="1"/>
</dbReference>
<dbReference type="Pfam" id="PF11612">
    <property type="entry name" value="T2SSJ"/>
    <property type="match status" value="1"/>
</dbReference>
<dbReference type="SUPFAM" id="SSF54523">
    <property type="entry name" value="Pili subunits"/>
    <property type="match status" value="1"/>
</dbReference>
<dbReference type="PROSITE" id="PS00409">
    <property type="entry name" value="PROKAR_NTER_METHYL"/>
    <property type="match status" value="1"/>
</dbReference>
<accession>P15749</accession>
<keyword id="KW-0997">Cell inner membrane</keyword>
<keyword id="KW-1003">Cell membrane</keyword>
<keyword id="KW-0472">Membrane</keyword>
<keyword id="KW-0488">Methylation</keyword>
<keyword id="KW-0653">Protein transport</keyword>
<keyword id="KW-0812">Transmembrane</keyword>
<keyword id="KW-1133">Transmembrane helix</keyword>
<keyword id="KW-0813">Transport</keyword>
<organism>
    <name type="scientific">Klebsiella pneumoniae</name>
    <dbReference type="NCBI Taxonomy" id="573"/>
    <lineage>
        <taxon>Bacteria</taxon>
        <taxon>Pseudomonadati</taxon>
        <taxon>Pseudomonadota</taxon>
        <taxon>Gammaproteobacteria</taxon>
        <taxon>Enterobacterales</taxon>
        <taxon>Enterobacteriaceae</taxon>
        <taxon>Klebsiella/Raoultella group</taxon>
        <taxon>Klebsiella</taxon>
        <taxon>Klebsiella pneumoniae complex</taxon>
    </lineage>
</organism>
<sequence>MIRRSSGFTLVEMLLALAILAALSVAAVTVLQNVMRADTLTRDKSGRMQALQQTFSQMAADFSQIIPRRSRDSASLFFAGRFQLGSDDGAIAFSRNGWPNPLGLLPRSEIQNVSYRLRGSQLERLNYDQQDPLPGSQPTVTIVLRDVRAFGLRFYASGRWQDEWQQAQTLPQGLEVTLTLEPYGEIRRLFLLTPGDSR</sequence>